<evidence type="ECO:0000255" key="1">
    <source>
        <dbReference type="HAMAP-Rule" id="MF_00391"/>
    </source>
</evidence>
<evidence type="ECO:0000256" key="2">
    <source>
        <dbReference type="SAM" id="MobiDB-lite"/>
    </source>
</evidence>
<evidence type="ECO:0000305" key="3"/>
<reference key="1">
    <citation type="journal article" date="2009" name="J. Bacteriol.">
        <title>Role of conjugative elements in the evolution of the multidrug-resistant pandemic clone Streptococcus pneumoniae Spain23F ST81.</title>
        <authorList>
            <person name="Croucher N.J."/>
            <person name="Walker D."/>
            <person name="Romero P."/>
            <person name="Lennard N."/>
            <person name="Paterson G.K."/>
            <person name="Bason N.C."/>
            <person name="Mitchell A.M."/>
            <person name="Quail M.A."/>
            <person name="Andrew P.W."/>
            <person name="Parkhill J."/>
            <person name="Bentley S.D."/>
            <person name="Mitchell T.J."/>
        </authorList>
    </citation>
    <scope>NUCLEOTIDE SEQUENCE [LARGE SCALE GENOMIC DNA]</scope>
    <source>
        <strain>ATCC 700669 / Spain 23F-1</strain>
    </source>
</reference>
<gene>
    <name evidence="1" type="primary">rpmH</name>
    <name type="ordered locus">SPN23F20140</name>
</gene>
<proteinExistence type="inferred from homology"/>
<sequence length="44" mass="5265">MKRTYQPSKLRRARKHGFRNRMSTKNGRRVLAARRRKGRKVLAA</sequence>
<accession>B8ZNZ8</accession>
<dbReference type="EMBL" id="FM211187">
    <property type="protein sequence ID" value="CAR69764.1"/>
    <property type="molecule type" value="Genomic_DNA"/>
</dbReference>
<dbReference type="RefSeq" id="WP_000831905.1">
    <property type="nucleotide sequence ID" value="NC_011900.1"/>
</dbReference>
<dbReference type="SMR" id="B8ZNZ8"/>
<dbReference type="GeneID" id="93738550"/>
<dbReference type="KEGG" id="sne:SPN23F20140"/>
<dbReference type="HOGENOM" id="CLU_129938_2_0_9"/>
<dbReference type="GO" id="GO:1990904">
    <property type="term" value="C:ribonucleoprotein complex"/>
    <property type="evidence" value="ECO:0007669"/>
    <property type="project" value="UniProtKB-KW"/>
</dbReference>
<dbReference type="GO" id="GO:0005840">
    <property type="term" value="C:ribosome"/>
    <property type="evidence" value="ECO:0007669"/>
    <property type="project" value="UniProtKB-KW"/>
</dbReference>
<dbReference type="GO" id="GO:0003735">
    <property type="term" value="F:structural constituent of ribosome"/>
    <property type="evidence" value="ECO:0007669"/>
    <property type="project" value="InterPro"/>
</dbReference>
<dbReference type="GO" id="GO:0006412">
    <property type="term" value="P:translation"/>
    <property type="evidence" value="ECO:0007669"/>
    <property type="project" value="UniProtKB-UniRule"/>
</dbReference>
<dbReference type="FunFam" id="1.10.287.3980:FF:000001">
    <property type="entry name" value="Mitochondrial ribosomal protein L34"/>
    <property type="match status" value="1"/>
</dbReference>
<dbReference type="Gene3D" id="1.10.287.3980">
    <property type="match status" value="1"/>
</dbReference>
<dbReference type="HAMAP" id="MF_00391">
    <property type="entry name" value="Ribosomal_bL34"/>
    <property type="match status" value="1"/>
</dbReference>
<dbReference type="InterPro" id="IPR000271">
    <property type="entry name" value="Ribosomal_bL34"/>
</dbReference>
<dbReference type="InterPro" id="IPR020939">
    <property type="entry name" value="Ribosomal_bL34_CS"/>
</dbReference>
<dbReference type="NCBIfam" id="TIGR01030">
    <property type="entry name" value="rpmH_bact"/>
    <property type="match status" value="1"/>
</dbReference>
<dbReference type="PANTHER" id="PTHR14503:SF4">
    <property type="entry name" value="LARGE RIBOSOMAL SUBUNIT PROTEIN BL34M"/>
    <property type="match status" value="1"/>
</dbReference>
<dbReference type="PANTHER" id="PTHR14503">
    <property type="entry name" value="MITOCHONDRIAL RIBOSOMAL PROTEIN 34 FAMILY MEMBER"/>
    <property type="match status" value="1"/>
</dbReference>
<dbReference type="Pfam" id="PF00468">
    <property type="entry name" value="Ribosomal_L34"/>
    <property type="match status" value="1"/>
</dbReference>
<dbReference type="PROSITE" id="PS00784">
    <property type="entry name" value="RIBOSOMAL_L34"/>
    <property type="match status" value="1"/>
</dbReference>
<keyword id="KW-0687">Ribonucleoprotein</keyword>
<keyword id="KW-0689">Ribosomal protein</keyword>
<protein>
    <recommendedName>
        <fullName evidence="1">Large ribosomal subunit protein bL34</fullName>
    </recommendedName>
    <alternativeName>
        <fullName evidence="3">50S ribosomal protein L34</fullName>
    </alternativeName>
</protein>
<organism>
    <name type="scientific">Streptococcus pneumoniae (strain ATCC 700669 / Spain 23F-1)</name>
    <dbReference type="NCBI Taxonomy" id="561276"/>
    <lineage>
        <taxon>Bacteria</taxon>
        <taxon>Bacillati</taxon>
        <taxon>Bacillota</taxon>
        <taxon>Bacilli</taxon>
        <taxon>Lactobacillales</taxon>
        <taxon>Streptococcaceae</taxon>
        <taxon>Streptococcus</taxon>
    </lineage>
</organism>
<feature type="chain" id="PRO_1000196118" description="Large ribosomal subunit protein bL34">
    <location>
        <begin position="1"/>
        <end position="44"/>
    </location>
</feature>
<feature type="region of interest" description="Disordered" evidence="2">
    <location>
        <begin position="1"/>
        <end position="44"/>
    </location>
</feature>
<feature type="compositionally biased region" description="Basic residues" evidence="2">
    <location>
        <begin position="1"/>
        <end position="19"/>
    </location>
</feature>
<feature type="compositionally biased region" description="Basic residues" evidence="2">
    <location>
        <begin position="26"/>
        <end position="44"/>
    </location>
</feature>
<name>RL34_STRPJ</name>
<comment type="similarity">
    <text evidence="1">Belongs to the bacterial ribosomal protein bL34 family.</text>
</comment>